<name>RL14_BORPE</name>
<reference key="1">
    <citation type="journal article" date="2003" name="Nat. Genet.">
        <title>Comparative analysis of the genome sequences of Bordetella pertussis, Bordetella parapertussis and Bordetella bronchiseptica.</title>
        <authorList>
            <person name="Parkhill J."/>
            <person name="Sebaihia M."/>
            <person name="Preston A."/>
            <person name="Murphy L.D."/>
            <person name="Thomson N.R."/>
            <person name="Harris D.E."/>
            <person name="Holden M.T.G."/>
            <person name="Churcher C.M."/>
            <person name="Bentley S.D."/>
            <person name="Mungall K.L."/>
            <person name="Cerdeno-Tarraga A.-M."/>
            <person name="Temple L."/>
            <person name="James K.D."/>
            <person name="Harris B."/>
            <person name="Quail M.A."/>
            <person name="Achtman M."/>
            <person name="Atkin R."/>
            <person name="Baker S."/>
            <person name="Basham D."/>
            <person name="Bason N."/>
            <person name="Cherevach I."/>
            <person name="Chillingworth T."/>
            <person name="Collins M."/>
            <person name="Cronin A."/>
            <person name="Davis P."/>
            <person name="Doggett J."/>
            <person name="Feltwell T."/>
            <person name="Goble A."/>
            <person name="Hamlin N."/>
            <person name="Hauser H."/>
            <person name="Holroyd S."/>
            <person name="Jagels K."/>
            <person name="Leather S."/>
            <person name="Moule S."/>
            <person name="Norberczak H."/>
            <person name="O'Neil S."/>
            <person name="Ormond D."/>
            <person name="Price C."/>
            <person name="Rabbinowitsch E."/>
            <person name="Rutter S."/>
            <person name="Sanders M."/>
            <person name="Saunders D."/>
            <person name="Seeger K."/>
            <person name="Sharp S."/>
            <person name="Simmonds M."/>
            <person name="Skelton J."/>
            <person name="Squares R."/>
            <person name="Squares S."/>
            <person name="Stevens K."/>
            <person name="Unwin L."/>
            <person name="Whitehead S."/>
            <person name="Barrell B.G."/>
            <person name="Maskell D.J."/>
        </authorList>
    </citation>
    <scope>NUCLEOTIDE SEQUENCE [LARGE SCALE GENOMIC DNA]</scope>
    <source>
        <strain>Tohama I / ATCC BAA-589 / NCTC 13251</strain>
    </source>
</reference>
<feature type="chain" id="PRO_1000055527" description="Large ribosomal subunit protein uL14">
    <location>
        <begin position="1"/>
        <end position="122"/>
    </location>
</feature>
<comment type="function">
    <text evidence="1">Binds to 23S rRNA. Forms part of two intersubunit bridges in the 70S ribosome.</text>
</comment>
<comment type="subunit">
    <text evidence="1">Part of the 50S ribosomal subunit. Forms a cluster with proteins L3 and L19. In the 70S ribosome, L14 and L19 interact and together make contacts with the 16S rRNA in bridges B5 and B8.</text>
</comment>
<comment type="similarity">
    <text evidence="1">Belongs to the universal ribosomal protein uL14 family.</text>
</comment>
<proteinExistence type="inferred from homology"/>
<protein>
    <recommendedName>
        <fullName evidence="1">Large ribosomal subunit protein uL14</fullName>
    </recommendedName>
    <alternativeName>
        <fullName evidence="2">50S ribosomal protein L14</fullName>
    </alternativeName>
</protein>
<accession>Q7VTC1</accession>
<evidence type="ECO:0000255" key="1">
    <source>
        <dbReference type="HAMAP-Rule" id="MF_01367"/>
    </source>
</evidence>
<evidence type="ECO:0000305" key="2"/>
<gene>
    <name evidence="1" type="primary">rplN</name>
    <name type="ordered locus">BP3626</name>
</gene>
<keyword id="KW-1185">Reference proteome</keyword>
<keyword id="KW-0687">Ribonucleoprotein</keyword>
<keyword id="KW-0689">Ribosomal protein</keyword>
<keyword id="KW-0694">RNA-binding</keyword>
<keyword id="KW-0699">rRNA-binding</keyword>
<sequence length="122" mass="13237">MIQMQTTLDVADNTGARAVMCIKVLGGSKRRYAGIGDIIKVSVKDAAPRGRVKKGEIYNAVVVRTAKGVRRKDGSLIRFGGNAAVLLNAKLEPIGTRIFGPVTRELRTERFMKIVSLAPEVL</sequence>
<dbReference type="EMBL" id="BX640422">
    <property type="protein sequence ID" value="CAE43883.1"/>
    <property type="molecule type" value="Genomic_DNA"/>
</dbReference>
<dbReference type="RefSeq" id="NP_882135.1">
    <property type="nucleotide sequence ID" value="NC_002929.2"/>
</dbReference>
<dbReference type="RefSeq" id="WP_003806916.1">
    <property type="nucleotide sequence ID" value="NZ_CP039022.1"/>
</dbReference>
<dbReference type="SMR" id="Q7VTC1"/>
<dbReference type="STRING" id="257313.BP3626"/>
<dbReference type="PaxDb" id="257313-BP3626"/>
<dbReference type="GeneID" id="93206271"/>
<dbReference type="KEGG" id="bpe:BP3626"/>
<dbReference type="PATRIC" id="fig|257313.5.peg.3923"/>
<dbReference type="eggNOG" id="COG0093">
    <property type="taxonomic scope" value="Bacteria"/>
</dbReference>
<dbReference type="HOGENOM" id="CLU_095071_2_1_4"/>
<dbReference type="PHI-base" id="PHI:11120"/>
<dbReference type="Proteomes" id="UP000002676">
    <property type="component" value="Chromosome"/>
</dbReference>
<dbReference type="GO" id="GO:0022625">
    <property type="term" value="C:cytosolic large ribosomal subunit"/>
    <property type="evidence" value="ECO:0007669"/>
    <property type="project" value="TreeGrafter"/>
</dbReference>
<dbReference type="GO" id="GO:0070180">
    <property type="term" value="F:large ribosomal subunit rRNA binding"/>
    <property type="evidence" value="ECO:0007669"/>
    <property type="project" value="TreeGrafter"/>
</dbReference>
<dbReference type="GO" id="GO:0003735">
    <property type="term" value="F:structural constituent of ribosome"/>
    <property type="evidence" value="ECO:0007669"/>
    <property type="project" value="InterPro"/>
</dbReference>
<dbReference type="GO" id="GO:0006412">
    <property type="term" value="P:translation"/>
    <property type="evidence" value="ECO:0007669"/>
    <property type="project" value="UniProtKB-UniRule"/>
</dbReference>
<dbReference type="CDD" id="cd00337">
    <property type="entry name" value="Ribosomal_uL14"/>
    <property type="match status" value="1"/>
</dbReference>
<dbReference type="FunFam" id="2.40.150.20:FF:000001">
    <property type="entry name" value="50S ribosomal protein L14"/>
    <property type="match status" value="1"/>
</dbReference>
<dbReference type="Gene3D" id="2.40.150.20">
    <property type="entry name" value="Ribosomal protein L14"/>
    <property type="match status" value="1"/>
</dbReference>
<dbReference type="HAMAP" id="MF_01367">
    <property type="entry name" value="Ribosomal_uL14"/>
    <property type="match status" value="1"/>
</dbReference>
<dbReference type="InterPro" id="IPR000218">
    <property type="entry name" value="Ribosomal_uL14"/>
</dbReference>
<dbReference type="InterPro" id="IPR005745">
    <property type="entry name" value="Ribosomal_uL14_bac-type"/>
</dbReference>
<dbReference type="InterPro" id="IPR019972">
    <property type="entry name" value="Ribosomal_uL14_CS"/>
</dbReference>
<dbReference type="InterPro" id="IPR036853">
    <property type="entry name" value="Ribosomal_uL14_sf"/>
</dbReference>
<dbReference type="NCBIfam" id="TIGR01067">
    <property type="entry name" value="rplN_bact"/>
    <property type="match status" value="1"/>
</dbReference>
<dbReference type="PANTHER" id="PTHR11761">
    <property type="entry name" value="50S/60S RIBOSOMAL PROTEIN L14/L23"/>
    <property type="match status" value="1"/>
</dbReference>
<dbReference type="PANTHER" id="PTHR11761:SF3">
    <property type="entry name" value="LARGE RIBOSOMAL SUBUNIT PROTEIN UL14M"/>
    <property type="match status" value="1"/>
</dbReference>
<dbReference type="Pfam" id="PF00238">
    <property type="entry name" value="Ribosomal_L14"/>
    <property type="match status" value="1"/>
</dbReference>
<dbReference type="SMART" id="SM01374">
    <property type="entry name" value="Ribosomal_L14"/>
    <property type="match status" value="1"/>
</dbReference>
<dbReference type="SUPFAM" id="SSF50193">
    <property type="entry name" value="Ribosomal protein L14"/>
    <property type="match status" value="1"/>
</dbReference>
<dbReference type="PROSITE" id="PS00049">
    <property type="entry name" value="RIBOSOMAL_L14"/>
    <property type="match status" value="1"/>
</dbReference>
<organism>
    <name type="scientific">Bordetella pertussis (strain Tohama I / ATCC BAA-589 / NCTC 13251)</name>
    <dbReference type="NCBI Taxonomy" id="257313"/>
    <lineage>
        <taxon>Bacteria</taxon>
        <taxon>Pseudomonadati</taxon>
        <taxon>Pseudomonadota</taxon>
        <taxon>Betaproteobacteria</taxon>
        <taxon>Burkholderiales</taxon>
        <taxon>Alcaligenaceae</taxon>
        <taxon>Bordetella</taxon>
    </lineage>
</organism>